<evidence type="ECO:0000250" key="1"/>
<evidence type="ECO:0000305" key="2"/>
<reference key="1">
    <citation type="journal article" date="1994" name="Mol. Gen. Genet.">
        <title>Glutathione transferase gene family from the housefly Musca domestica.</title>
        <authorList>
            <person name="Syvanen M."/>
            <person name="Zhou Z."/>
            <person name="Wang J."/>
        </authorList>
    </citation>
    <scope>NUCLEOTIDE SEQUENCE [MRNA]</scope>
    <source>
        <strain>Cornell-R</strain>
    </source>
</reference>
<name>GSTT3_MUSDO</name>
<keyword id="KW-1185">Reference proteome</keyword>
<keyword id="KW-0808">Transferase</keyword>
<proteinExistence type="evidence at transcript level"/>
<dbReference type="EC" id="2.5.1.18"/>
<dbReference type="EMBL" id="X73575">
    <property type="protein sequence ID" value="CAA51977.1"/>
    <property type="molecule type" value="mRNA"/>
</dbReference>
<dbReference type="EMBL" id="X94279">
    <property type="protein sequence ID" value="CAA63944.1"/>
    <property type="molecule type" value="Genomic_DNA"/>
</dbReference>
<dbReference type="PIR" id="S51567">
    <property type="entry name" value="S51567"/>
</dbReference>
<dbReference type="SMR" id="P46432"/>
<dbReference type="STRING" id="7370.P46432"/>
<dbReference type="VEuPathDB" id="VectorBase:MDOA011215"/>
<dbReference type="VEuPathDB" id="VectorBase:MDOMA2_005932"/>
<dbReference type="Proteomes" id="UP000694905">
    <property type="component" value="Unplaced"/>
</dbReference>
<dbReference type="GO" id="GO:0004364">
    <property type="term" value="F:glutathione transferase activity"/>
    <property type="evidence" value="ECO:0007669"/>
    <property type="project" value="UniProtKB-EC"/>
</dbReference>
<dbReference type="GO" id="GO:0006749">
    <property type="term" value="P:glutathione metabolic process"/>
    <property type="evidence" value="ECO:0007669"/>
    <property type="project" value="TreeGrafter"/>
</dbReference>
<dbReference type="CDD" id="cd03177">
    <property type="entry name" value="GST_C_Delta_Epsilon"/>
    <property type="match status" value="1"/>
</dbReference>
<dbReference type="CDD" id="cd03045">
    <property type="entry name" value="GST_N_Delta_Epsilon"/>
    <property type="match status" value="1"/>
</dbReference>
<dbReference type="FunFam" id="3.40.30.10:FF:000034">
    <property type="entry name" value="glutathione S-transferase 1"/>
    <property type="match status" value="1"/>
</dbReference>
<dbReference type="FunFam" id="1.20.1050.10:FF:000007">
    <property type="entry name" value="Glutathione S-transferase 1-1"/>
    <property type="match status" value="1"/>
</dbReference>
<dbReference type="Gene3D" id="1.20.1050.10">
    <property type="match status" value="1"/>
</dbReference>
<dbReference type="Gene3D" id="3.40.30.10">
    <property type="entry name" value="Glutaredoxin"/>
    <property type="match status" value="1"/>
</dbReference>
<dbReference type="InterPro" id="IPR010987">
    <property type="entry name" value="Glutathione-S-Trfase_C-like"/>
</dbReference>
<dbReference type="InterPro" id="IPR036282">
    <property type="entry name" value="Glutathione-S-Trfase_C_sf"/>
</dbReference>
<dbReference type="InterPro" id="IPR040079">
    <property type="entry name" value="Glutathione_S-Trfase"/>
</dbReference>
<dbReference type="InterPro" id="IPR004045">
    <property type="entry name" value="Glutathione_S-Trfase_N"/>
</dbReference>
<dbReference type="InterPro" id="IPR004046">
    <property type="entry name" value="GST_C"/>
</dbReference>
<dbReference type="InterPro" id="IPR036249">
    <property type="entry name" value="Thioredoxin-like_sf"/>
</dbReference>
<dbReference type="PANTHER" id="PTHR43969">
    <property type="entry name" value="GLUTATHIONE S TRANSFERASE D10, ISOFORM A-RELATED"/>
    <property type="match status" value="1"/>
</dbReference>
<dbReference type="PANTHER" id="PTHR43969:SF9">
    <property type="entry name" value="GLUTATHIONE S TRANSFERASE D10, ISOFORM A-RELATED"/>
    <property type="match status" value="1"/>
</dbReference>
<dbReference type="Pfam" id="PF00043">
    <property type="entry name" value="GST_C"/>
    <property type="match status" value="1"/>
</dbReference>
<dbReference type="Pfam" id="PF13417">
    <property type="entry name" value="GST_N_3"/>
    <property type="match status" value="1"/>
</dbReference>
<dbReference type="SFLD" id="SFLDS00019">
    <property type="entry name" value="Glutathione_Transferase_(cytos"/>
    <property type="match status" value="1"/>
</dbReference>
<dbReference type="SFLD" id="SFLDG01153">
    <property type="entry name" value="Main.4:_Theta-like"/>
    <property type="match status" value="1"/>
</dbReference>
<dbReference type="SUPFAM" id="SSF47616">
    <property type="entry name" value="GST C-terminal domain-like"/>
    <property type="match status" value="1"/>
</dbReference>
<dbReference type="SUPFAM" id="SSF52833">
    <property type="entry name" value="Thioredoxin-like"/>
    <property type="match status" value="1"/>
</dbReference>
<dbReference type="PROSITE" id="PS50405">
    <property type="entry name" value="GST_CTER"/>
    <property type="match status" value="1"/>
</dbReference>
<dbReference type="PROSITE" id="PS50404">
    <property type="entry name" value="GST_NTER"/>
    <property type="match status" value="1"/>
</dbReference>
<sequence length="210" mass="24343">MDFYYLPLSAPCRSVIMTAKALGIELNKKLLNLFEGEHLKPEFLKINPQHTIPTLVDNGFAMWESRAIMVYLVEKYGKQNDPLYPSCPKKRALINQRLYFDMGTLWKSYADYTYPQFRENKPADPELFKKFESALEFLNIFLSQSKYAAGQTMTLADLAILASVSTFDVVQMDLSKYEHILRWYNMLKDTAPGAAENWAGCLEMKKYFKK</sequence>
<protein>
    <recommendedName>
        <fullName>Glutathione S-transferase 3</fullName>
        <ecNumber>2.5.1.18</ecNumber>
    </recommendedName>
    <alternativeName>
        <fullName>GST class-theta</fullName>
    </alternativeName>
</protein>
<comment type="function">
    <text>Conjugation of reduced glutathione to a wide number of exogenous and endogenous hydrophobic electrophiles.</text>
</comment>
<comment type="catalytic activity">
    <reaction>
        <text>RX + glutathione = an S-substituted glutathione + a halide anion + H(+)</text>
        <dbReference type="Rhea" id="RHEA:16437"/>
        <dbReference type="ChEBI" id="CHEBI:15378"/>
        <dbReference type="ChEBI" id="CHEBI:16042"/>
        <dbReference type="ChEBI" id="CHEBI:17792"/>
        <dbReference type="ChEBI" id="CHEBI:57925"/>
        <dbReference type="ChEBI" id="CHEBI:90779"/>
        <dbReference type="EC" id="2.5.1.18"/>
    </reaction>
</comment>
<comment type="subunit">
    <text evidence="1">Homodimer.</text>
</comment>
<comment type="similarity">
    <text evidence="2">Belongs to the GST superfamily. Theta family.</text>
</comment>
<organism>
    <name type="scientific">Musca domestica</name>
    <name type="common">House fly</name>
    <dbReference type="NCBI Taxonomy" id="7370"/>
    <lineage>
        <taxon>Eukaryota</taxon>
        <taxon>Metazoa</taxon>
        <taxon>Ecdysozoa</taxon>
        <taxon>Arthropoda</taxon>
        <taxon>Hexapoda</taxon>
        <taxon>Insecta</taxon>
        <taxon>Pterygota</taxon>
        <taxon>Neoptera</taxon>
        <taxon>Endopterygota</taxon>
        <taxon>Diptera</taxon>
        <taxon>Brachycera</taxon>
        <taxon>Muscomorpha</taxon>
        <taxon>Muscoidea</taxon>
        <taxon>Muscidae</taxon>
        <taxon>Musca</taxon>
    </lineage>
</organism>
<accession>P46432</accession>
<gene>
    <name type="primary">Gst3</name>
    <name type="synonym">Gst-3</name>
</gene>
<feature type="chain" id="PRO_0000185967" description="Glutathione S-transferase 3">
    <location>
        <begin position="1"/>
        <end position="210"/>
    </location>
</feature>
<feature type="domain" description="GST N-terminal">
    <location>
        <begin position="1"/>
        <end position="80"/>
    </location>
</feature>
<feature type="domain" description="GST C-terminal">
    <location>
        <begin position="87"/>
        <end position="208"/>
    </location>
</feature>
<feature type="binding site" evidence="1">
    <location>
        <position position="9"/>
    </location>
    <ligand>
        <name>glutathione</name>
        <dbReference type="ChEBI" id="CHEBI:57925"/>
    </ligand>
</feature>
<feature type="binding site" evidence="1">
    <location>
        <begin position="50"/>
        <end position="52"/>
    </location>
    <ligand>
        <name>glutathione</name>
        <dbReference type="ChEBI" id="CHEBI:57925"/>
    </ligand>
</feature>
<feature type="binding site" evidence="1">
    <location>
        <begin position="64"/>
        <end position="66"/>
    </location>
    <ligand>
        <name>glutathione</name>
        <dbReference type="ChEBI" id="CHEBI:57925"/>
    </ligand>
</feature>